<proteinExistence type="predicted"/>
<organismHost>
    <name type="scientific">Homo sapiens</name>
    <name type="common">Human</name>
    <dbReference type="NCBI Taxonomy" id="9606"/>
</organismHost>
<comment type="subcellular location">
    <subcellularLocation>
        <location evidence="2">Host membrane</location>
        <topology evidence="2">Single-pass membrane protein</topology>
    </subcellularLocation>
</comment>
<organism>
    <name type="scientific">Human herpesvirus 6B (strain Z29)</name>
    <name type="common">HHV-6 variant B</name>
    <name type="synonym">Human B lymphotropic virus</name>
    <dbReference type="NCBI Taxonomy" id="36351"/>
    <lineage>
        <taxon>Viruses</taxon>
        <taxon>Duplodnaviria</taxon>
        <taxon>Heunggongvirae</taxon>
        <taxon>Peploviricota</taxon>
        <taxon>Herviviricetes</taxon>
        <taxon>Herpesvirales</taxon>
        <taxon>Orthoherpesviridae</taxon>
        <taxon>Betaherpesvirinae</taxon>
        <taxon>Roseolovirus</taxon>
        <taxon>Roseolovirus humanbeta6b</taxon>
        <taxon>Human herpesvirus 6B</taxon>
    </lineage>
</organism>
<reference key="1">
    <citation type="journal article" date="1999" name="J. Virol.">
        <title>Human herpesvirus 6B genome sequence: coding content and comparison with human herpesvirus 6A.</title>
        <authorList>
            <person name="Dominguez G."/>
            <person name="Dambaugh T.R."/>
            <person name="Stamey F.R."/>
            <person name="Dewhurst S."/>
            <person name="Inoue N."/>
            <person name="Pellett P.E."/>
        </authorList>
    </citation>
    <scope>NUCLEOTIDE SEQUENCE [LARGE SCALE GENOMIC DNA]</scope>
</reference>
<protein>
    <recommendedName>
        <fullName>Protein U15</fullName>
    </recommendedName>
</protein>
<feature type="chain" id="PRO_0000408419" description="Protein U15">
    <location>
        <begin position="1"/>
        <end position="191"/>
    </location>
</feature>
<feature type="transmembrane region" description="Helical" evidence="1">
    <location>
        <begin position="50"/>
        <end position="72"/>
    </location>
</feature>
<sequence>MDVWKRQRLQECRELCPLPALMSLSNILSNTEIIYVKYLFKMDFSTMYRFILPALTLSMTVTKSVVIEMLFILKRWEEINQFFRLNIRKVNDCFVVAQFTNIPVKRKIIVLLYMLTSRQEKQLFLNMIYAFLEKSHLRLGDDEEQNAIRFFSYVDELHLTRDVLLEIIYKLKNTEINQTMELLLSYNELAG</sequence>
<name>U15_HHV6Z</name>
<accession>Q9QJ48</accession>
<gene>
    <name type="primary">U15</name>
</gene>
<dbReference type="EMBL" id="AF157706">
    <property type="protein sequence ID" value="AAD49689.1"/>
    <property type="molecule type" value="Genomic_DNA"/>
</dbReference>
<dbReference type="RefSeq" id="NP_050196.1">
    <property type="nucleotide sequence ID" value="NC_000898.1"/>
</dbReference>
<dbReference type="DNASU" id="1497101"/>
<dbReference type="GeneID" id="1497101"/>
<dbReference type="KEGG" id="vg:1497101"/>
<dbReference type="Proteomes" id="UP000006930">
    <property type="component" value="Segment"/>
</dbReference>
<dbReference type="GO" id="GO:0033644">
    <property type="term" value="C:host cell membrane"/>
    <property type="evidence" value="ECO:0007669"/>
    <property type="project" value="UniProtKB-SubCell"/>
</dbReference>
<dbReference type="GO" id="GO:0016020">
    <property type="term" value="C:membrane"/>
    <property type="evidence" value="ECO:0007669"/>
    <property type="project" value="UniProtKB-KW"/>
</dbReference>
<dbReference type="InterPro" id="IPR008644">
    <property type="entry name" value="Herpes_U15"/>
</dbReference>
<dbReference type="Pfam" id="PF05613">
    <property type="entry name" value="Herpes_U15"/>
    <property type="match status" value="1"/>
</dbReference>
<evidence type="ECO:0000255" key="1"/>
<evidence type="ECO:0000305" key="2"/>
<keyword id="KW-1043">Host membrane</keyword>
<keyword id="KW-0472">Membrane</keyword>
<keyword id="KW-1185">Reference proteome</keyword>
<keyword id="KW-0812">Transmembrane</keyword>
<keyword id="KW-1133">Transmembrane helix</keyword>